<accession>Q1CLS8</accession>
<accession>C4GPQ8</accession>
<sequence>MTTQAPPTSLLPLSPEQLARLQAAVGEFSPTQMAWLSGYFWGMVNQQPGAVASPAVAAPPPVTVTLISASQTGNARRLAEQLRDDLLAAQLSVNLVNAGDYKFKQIAQERLLVVVASTQGEGEPAEEAVALHKFLFSKKAPKLSETAFAVFGLGDTSYEHFCQAGKDFDSKLAELGAQRLLDRVDADVEYQVQAQQWRQQVVATLQAKVPAQSTAPTQFIAPTQSTTPAAAAITSGGTTTVSPYSKTAPLTAQLSVQQKVTGRNSEKDVRHIEIDLGDSGLRYQPGDALGVWFDNDPALVEELLALLWLKGDEPVSIDGQNMPLAQALLSHLELTQNTTLIVDKYAALSRDETLIALLADKPALQLYAKNTPFVDMVRQAPSDLNADQLVGLLRPLTPRLYSIASSQAETENEVHITVGVVRYDIDGRARSGGASGYLADRLEVDGDIRVFIEHNDNFRLPANPETPVIMIGPGTGIAPFRAFMQQREVDGASGKNWLFFGNPHFTEDFLYQVEWQRYVKEGVLTRIDLAWSRDQAHKIYVQDKLREQGAELWNWIQQGAHIYVCGDANRMAKDVEQVLLDVVALHGAMDAEQADEYLSELRQARRYQRDVY</sequence>
<dbReference type="EC" id="1.8.1.2" evidence="1"/>
<dbReference type="EMBL" id="CP000305">
    <property type="protein sequence ID" value="ABG17052.1"/>
    <property type="molecule type" value="Genomic_DNA"/>
</dbReference>
<dbReference type="EMBL" id="ACNQ01000007">
    <property type="protein sequence ID" value="EEO77914.1"/>
    <property type="molecule type" value="Genomic_DNA"/>
</dbReference>
<dbReference type="RefSeq" id="WP_002223202.1">
    <property type="nucleotide sequence ID" value="NZ_ACNQ01000007.1"/>
</dbReference>
<dbReference type="SMR" id="Q1CLS8"/>
<dbReference type="KEGG" id="ypn:YPN_0720"/>
<dbReference type="HOGENOM" id="CLU_001570_17_7_6"/>
<dbReference type="UniPathway" id="UPA00140">
    <property type="reaction ID" value="UER00207"/>
</dbReference>
<dbReference type="Proteomes" id="UP000008936">
    <property type="component" value="Chromosome"/>
</dbReference>
<dbReference type="GO" id="GO:0005829">
    <property type="term" value="C:cytosol"/>
    <property type="evidence" value="ECO:0007669"/>
    <property type="project" value="TreeGrafter"/>
</dbReference>
<dbReference type="GO" id="GO:0050660">
    <property type="term" value="F:flavin adenine dinucleotide binding"/>
    <property type="evidence" value="ECO:0007669"/>
    <property type="project" value="InterPro"/>
</dbReference>
<dbReference type="GO" id="GO:0010181">
    <property type="term" value="F:FMN binding"/>
    <property type="evidence" value="ECO:0007669"/>
    <property type="project" value="InterPro"/>
</dbReference>
<dbReference type="GO" id="GO:0004783">
    <property type="term" value="F:sulfite reductase (NADPH) activity"/>
    <property type="evidence" value="ECO:0007669"/>
    <property type="project" value="UniProtKB-UniRule"/>
</dbReference>
<dbReference type="GO" id="GO:0019344">
    <property type="term" value="P:cysteine biosynthetic process"/>
    <property type="evidence" value="ECO:0007669"/>
    <property type="project" value="UniProtKB-KW"/>
</dbReference>
<dbReference type="GO" id="GO:0070814">
    <property type="term" value="P:hydrogen sulfide biosynthetic process"/>
    <property type="evidence" value="ECO:0007669"/>
    <property type="project" value="UniProtKB-UniRule"/>
</dbReference>
<dbReference type="GO" id="GO:0000103">
    <property type="term" value="P:sulfate assimilation"/>
    <property type="evidence" value="ECO:0007669"/>
    <property type="project" value="UniProtKB-UniRule"/>
</dbReference>
<dbReference type="CDD" id="cd06199">
    <property type="entry name" value="SiR"/>
    <property type="match status" value="1"/>
</dbReference>
<dbReference type="FunFam" id="3.40.50.80:FF:000001">
    <property type="entry name" value="NADPH--cytochrome P450 reductase 1"/>
    <property type="match status" value="1"/>
</dbReference>
<dbReference type="FunFam" id="1.20.990.10:FF:000004">
    <property type="entry name" value="Sulfite reductase [NADPH] flavoprotein alpha-component"/>
    <property type="match status" value="1"/>
</dbReference>
<dbReference type="FunFam" id="3.40.50.360:FF:000018">
    <property type="entry name" value="Sulfite reductase [NADPH] flavoprotein alpha-component"/>
    <property type="match status" value="1"/>
</dbReference>
<dbReference type="Gene3D" id="3.40.50.360">
    <property type="match status" value="1"/>
</dbReference>
<dbReference type="Gene3D" id="1.20.990.10">
    <property type="entry name" value="NADPH-cytochrome p450 Reductase, Chain A, domain 3"/>
    <property type="match status" value="1"/>
</dbReference>
<dbReference type="Gene3D" id="3.40.50.80">
    <property type="entry name" value="Nucleotide-binding domain of ferredoxin-NADP reductase (FNR) module"/>
    <property type="match status" value="1"/>
</dbReference>
<dbReference type="Gene3D" id="2.40.30.10">
    <property type="entry name" value="Translation factors"/>
    <property type="match status" value="1"/>
</dbReference>
<dbReference type="HAMAP" id="MF_01541">
    <property type="entry name" value="CysJ"/>
    <property type="match status" value="1"/>
</dbReference>
<dbReference type="InterPro" id="IPR010199">
    <property type="entry name" value="CysJ"/>
</dbReference>
<dbReference type="InterPro" id="IPR003097">
    <property type="entry name" value="CysJ-like_FAD-binding"/>
</dbReference>
<dbReference type="InterPro" id="IPR029758">
    <property type="entry name" value="CysJ_Proteobact"/>
</dbReference>
<dbReference type="InterPro" id="IPR017927">
    <property type="entry name" value="FAD-bd_FR_type"/>
</dbReference>
<dbReference type="InterPro" id="IPR001094">
    <property type="entry name" value="Flavdoxin-like"/>
</dbReference>
<dbReference type="InterPro" id="IPR008254">
    <property type="entry name" value="Flavodoxin/NO_synth"/>
</dbReference>
<dbReference type="InterPro" id="IPR001709">
    <property type="entry name" value="Flavoprot_Pyr_Nucl_cyt_Rdtase"/>
</dbReference>
<dbReference type="InterPro" id="IPR029039">
    <property type="entry name" value="Flavoprotein-like_sf"/>
</dbReference>
<dbReference type="InterPro" id="IPR039261">
    <property type="entry name" value="FNR_nucleotide-bd"/>
</dbReference>
<dbReference type="InterPro" id="IPR023173">
    <property type="entry name" value="NADPH_Cyt_P450_Rdtase_alpha"/>
</dbReference>
<dbReference type="InterPro" id="IPR001433">
    <property type="entry name" value="OxRdtase_FAD/NAD-bd"/>
</dbReference>
<dbReference type="InterPro" id="IPR017938">
    <property type="entry name" value="Riboflavin_synthase-like_b-brl"/>
</dbReference>
<dbReference type="NCBIfam" id="TIGR01931">
    <property type="entry name" value="cysJ"/>
    <property type="match status" value="1"/>
</dbReference>
<dbReference type="NCBIfam" id="NF008197">
    <property type="entry name" value="PRK10953.1"/>
    <property type="match status" value="1"/>
</dbReference>
<dbReference type="PANTHER" id="PTHR19384:SF128">
    <property type="entry name" value="NADPH OXIDOREDUCTASE A"/>
    <property type="match status" value="1"/>
</dbReference>
<dbReference type="PANTHER" id="PTHR19384">
    <property type="entry name" value="NITRIC OXIDE SYNTHASE-RELATED"/>
    <property type="match status" value="1"/>
</dbReference>
<dbReference type="Pfam" id="PF00667">
    <property type="entry name" value="FAD_binding_1"/>
    <property type="match status" value="1"/>
</dbReference>
<dbReference type="Pfam" id="PF00258">
    <property type="entry name" value="Flavodoxin_1"/>
    <property type="match status" value="1"/>
</dbReference>
<dbReference type="Pfam" id="PF00175">
    <property type="entry name" value="NAD_binding_1"/>
    <property type="match status" value="1"/>
</dbReference>
<dbReference type="PIRSF" id="PIRSF000207">
    <property type="entry name" value="SiR-FP_CysJ"/>
    <property type="match status" value="1"/>
</dbReference>
<dbReference type="PRINTS" id="PR00369">
    <property type="entry name" value="FLAVODOXIN"/>
</dbReference>
<dbReference type="PRINTS" id="PR00371">
    <property type="entry name" value="FPNCR"/>
</dbReference>
<dbReference type="SUPFAM" id="SSF52343">
    <property type="entry name" value="Ferredoxin reductase-like, C-terminal NADP-linked domain"/>
    <property type="match status" value="1"/>
</dbReference>
<dbReference type="SUPFAM" id="SSF52218">
    <property type="entry name" value="Flavoproteins"/>
    <property type="match status" value="1"/>
</dbReference>
<dbReference type="SUPFAM" id="SSF63380">
    <property type="entry name" value="Riboflavin synthase domain-like"/>
    <property type="match status" value="1"/>
</dbReference>
<dbReference type="PROSITE" id="PS51384">
    <property type="entry name" value="FAD_FR"/>
    <property type="match status" value="1"/>
</dbReference>
<dbReference type="PROSITE" id="PS50902">
    <property type="entry name" value="FLAVODOXIN_LIKE"/>
    <property type="match status" value="1"/>
</dbReference>
<evidence type="ECO:0000255" key="1">
    <source>
        <dbReference type="HAMAP-Rule" id="MF_01541"/>
    </source>
</evidence>
<reference key="1">
    <citation type="journal article" date="2006" name="J. Bacteriol.">
        <title>Complete genome sequence of Yersinia pestis strains Antiqua and Nepal516: evidence of gene reduction in an emerging pathogen.</title>
        <authorList>
            <person name="Chain P.S.G."/>
            <person name="Hu P."/>
            <person name="Malfatti S.A."/>
            <person name="Radnedge L."/>
            <person name="Larimer F."/>
            <person name="Vergez L.M."/>
            <person name="Worsham P."/>
            <person name="Chu M.C."/>
            <person name="Andersen G.L."/>
        </authorList>
    </citation>
    <scope>NUCLEOTIDE SEQUENCE [LARGE SCALE GENOMIC DNA]</scope>
    <source>
        <strain>Nepal516</strain>
    </source>
</reference>
<reference key="2">
    <citation type="submission" date="2009-04" db="EMBL/GenBank/DDBJ databases">
        <title>Yersinia pestis Nepal516A whole genome shotgun sequencing project.</title>
        <authorList>
            <person name="Plunkett G. III"/>
            <person name="Anderson B.D."/>
            <person name="Baumler D.J."/>
            <person name="Burland V."/>
            <person name="Cabot E.L."/>
            <person name="Glasner J.D."/>
            <person name="Mau B."/>
            <person name="Neeno-Eckwall E."/>
            <person name="Perna N.T."/>
            <person name="Munk A.C."/>
            <person name="Tapia R."/>
            <person name="Green L.D."/>
            <person name="Rogers Y.C."/>
            <person name="Detter J.C."/>
            <person name="Bruce D.C."/>
            <person name="Brettin T.S."/>
        </authorList>
    </citation>
    <scope>NUCLEOTIDE SEQUENCE [LARGE SCALE GENOMIC DNA]</scope>
    <source>
        <strain>Nepal516</strain>
    </source>
</reference>
<name>CYSJ_YERPN</name>
<comment type="function">
    <text evidence="1">Component of the sulfite reductase complex that catalyzes the 6-electron reduction of sulfite to sulfide. This is one of several activities required for the biosynthesis of L-cysteine from sulfate. The flavoprotein component catalyzes the electron flow from NADPH -&gt; FAD -&gt; FMN to the hemoprotein component.</text>
</comment>
<comment type="catalytic activity">
    <reaction evidence="1">
        <text>hydrogen sulfide + 3 NADP(+) + 3 H2O = sulfite + 3 NADPH + 4 H(+)</text>
        <dbReference type="Rhea" id="RHEA:13801"/>
        <dbReference type="ChEBI" id="CHEBI:15377"/>
        <dbReference type="ChEBI" id="CHEBI:15378"/>
        <dbReference type="ChEBI" id="CHEBI:17359"/>
        <dbReference type="ChEBI" id="CHEBI:29919"/>
        <dbReference type="ChEBI" id="CHEBI:57783"/>
        <dbReference type="ChEBI" id="CHEBI:58349"/>
        <dbReference type="EC" id="1.8.1.2"/>
    </reaction>
</comment>
<comment type="cofactor">
    <cofactor evidence="1">
        <name>FAD</name>
        <dbReference type="ChEBI" id="CHEBI:57692"/>
    </cofactor>
    <text evidence="1">Binds 1 FAD per subunit.</text>
</comment>
<comment type="cofactor">
    <cofactor evidence="1">
        <name>FMN</name>
        <dbReference type="ChEBI" id="CHEBI:58210"/>
    </cofactor>
    <text evidence="1">Binds 1 FMN per subunit.</text>
</comment>
<comment type="pathway">
    <text evidence="1">Sulfur metabolism; hydrogen sulfide biosynthesis; hydrogen sulfide from sulfite (NADPH route): step 1/1.</text>
</comment>
<comment type="subunit">
    <text evidence="1">Alpha(8)-beta(8). The alpha component is a flavoprotein, the beta component is a hemoprotein.</text>
</comment>
<comment type="similarity">
    <text evidence="1">Belongs to the NADPH-dependent sulphite reductase flavoprotein subunit CysJ family.</text>
</comment>
<comment type="similarity">
    <text evidence="1">In the N-terminal section; belongs to the flavodoxin family.</text>
</comment>
<comment type="similarity">
    <text evidence="1">In the C-terminal section; belongs to the flavoprotein pyridine nucleotide cytochrome reductase family.</text>
</comment>
<feature type="chain" id="PRO_0000292980" description="Sulfite reductase [NADPH] flavoprotein alpha-component">
    <location>
        <begin position="1"/>
        <end position="612"/>
    </location>
</feature>
<feature type="domain" description="Flavodoxin-like" evidence="1">
    <location>
        <begin position="64"/>
        <end position="202"/>
    </location>
</feature>
<feature type="domain" description="FAD-binding FR-type" evidence="1">
    <location>
        <begin position="247"/>
        <end position="461"/>
    </location>
</feature>
<feature type="binding site" evidence="1">
    <location>
        <begin position="70"/>
        <end position="75"/>
    </location>
    <ligand>
        <name>FMN</name>
        <dbReference type="ChEBI" id="CHEBI:58210"/>
    </ligand>
</feature>
<feature type="binding site" evidence="1">
    <location>
        <begin position="117"/>
        <end position="120"/>
    </location>
    <ligand>
        <name>FMN</name>
        <dbReference type="ChEBI" id="CHEBI:58210"/>
    </ligand>
</feature>
<feature type="binding site" evidence="1">
    <location>
        <begin position="153"/>
        <end position="162"/>
    </location>
    <ligand>
        <name>FMN</name>
        <dbReference type="ChEBI" id="CHEBI:58210"/>
    </ligand>
</feature>
<feature type="binding site" evidence="1">
    <location>
        <position position="335"/>
    </location>
    <ligand>
        <name>FAD</name>
        <dbReference type="ChEBI" id="CHEBI:57692"/>
    </ligand>
</feature>
<feature type="binding site" evidence="1">
    <location>
        <position position="369"/>
    </location>
    <ligand>
        <name>FAD</name>
        <dbReference type="ChEBI" id="CHEBI:57692"/>
    </ligand>
</feature>
<feature type="binding site" evidence="1">
    <location>
        <begin position="399"/>
        <end position="402"/>
    </location>
    <ligand>
        <name>FAD</name>
        <dbReference type="ChEBI" id="CHEBI:57692"/>
    </ligand>
</feature>
<feature type="binding site" evidence="1">
    <location>
        <begin position="417"/>
        <end position="419"/>
    </location>
    <ligand>
        <name>FAD</name>
        <dbReference type="ChEBI" id="CHEBI:57692"/>
    </ligand>
</feature>
<feature type="binding site" evidence="1">
    <location>
        <position position="423"/>
    </location>
    <ligand>
        <name>FAD</name>
        <dbReference type="ChEBI" id="CHEBI:57692"/>
    </ligand>
</feature>
<feature type="binding site" evidence="1">
    <location>
        <begin position="432"/>
        <end position="435"/>
    </location>
    <ligand>
        <name>FAD</name>
        <dbReference type="ChEBI" id="CHEBI:57692"/>
    </ligand>
</feature>
<feature type="binding site" evidence="1">
    <location>
        <begin position="532"/>
        <end position="533"/>
    </location>
    <ligand>
        <name>NADP(+)</name>
        <dbReference type="ChEBI" id="CHEBI:58349"/>
    </ligand>
</feature>
<feature type="binding site" evidence="1">
    <location>
        <begin position="538"/>
        <end position="542"/>
    </location>
    <ligand>
        <name>NADP(+)</name>
        <dbReference type="ChEBI" id="CHEBI:58349"/>
    </ligand>
</feature>
<feature type="binding site" evidence="1">
    <location>
        <position position="574"/>
    </location>
    <ligand>
        <name>NADP(+)</name>
        <dbReference type="ChEBI" id="CHEBI:58349"/>
    </ligand>
</feature>
<feature type="binding site" evidence="1">
    <location>
        <position position="612"/>
    </location>
    <ligand>
        <name>FAD</name>
        <dbReference type="ChEBI" id="CHEBI:57692"/>
    </ligand>
</feature>
<organism>
    <name type="scientific">Yersinia pestis bv. Antiqua (strain Nepal516)</name>
    <dbReference type="NCBI Taxonomy" id="377628"/>
    <lineage>
        <taxon>Bacteria</taxon>
        <taxon>Pseudomonadati</taxon>
        <taxon>Pseudomonadota</taxon>
        <taxon>Gammaproteobacteria</taxon>
        <taxon>Enterobacterales</taxon>
        <taxon>Yersiniaceae</taxon>
        <taxon>Yersinia</taxon>
    </lineage>
</organism>
<keyword id="KW-0028">Amino-acid biosynthesis</keyword>
<keyword id="KW-0198">Cysteine biosynthesis</keyword>
<keyword id="KW-0249">Electron transport</keyword>
<keyword id="KW-0274">FAD</keyword>
<keyword id="KW-0285">Flavoprotein</keyword>
<keyword id="KW-0288">FMN</keyword>
<keyword id="KW-0521">NADP</keyword>
<keyword id="KW-0560">Oxidoreductase</keyword>
<keyword id="KW-0813">Transport</keyword>
<gene>
    <name evidence="1" type="primary">cysJ</name>
    <name type="ordered locus">YPN_0720</name>
    <name type="ORF">YP516_0766</name>
</gene>
<proteinExistence type="inferred from homology"/>
<protein>
    <recommendedName>
        <fullName evidence="1">Sulfite reductase [NADPH] flavoprotein alpha-component</fullName>
        <shortName evidence="1">SiR-FP</shortName>
        <ecNumber evidence="1">1.8.1.2</ecNumber>
    </recommendedName>
</protein>